<keyword id="KW-0010">Activator</keyword>
<keyword id="KW-0963">Cytoplasm</keyword>
<keyword id="KW-0238">DNA-binding</keyword>
<keyword id="KW-0677">Repeat</keyword>
<keyword id="KW-0684">Rhamnose metabolism</keyword>
<keyword id="KW-0804">Transcription</keyword>
<keyword id="KW-0805">Transcription regulation</keyword>
<evidence type="ECO:0000255" key="1">
    <source>
        <dbReference type="HAMAP-Rule" id="MF_01534"/>
    </source>
</evidence>
<feature type="chain" id="PRO_1000200956" description="HTH-type transcriptional activator RhaS">
    <location>
        <begin position="1"/>
        <end position="278"/>
    </location>
</feature>
<feature type="domain" description="HTH araC/xylS-type" evidence="1">
    <location>
        <begin position="174"/>
        <end position="272"/>
    </location>
</feature>
<feature type="DNA-binding region" description="H-T-H motif" evidence="1">
    <location>
        <begin position="191"/>
        <end position="212"/>
    </location>
</feature>
<feature type="DNA-binding region" description="H-T-H motif" evidence="1">
    <location>
        <begin position="239"/>
        <end position="262"/>
    </location>
</feature>
<feature type="site" description="Interaction with sigma-70" evidence="1">
    <location>
        <position position="250"/>
    </location>
</feature>
<accession>B7LVD8</accession>
<sequence length="278" mass="32181">MTKLHSVDFFPAQEVSVAIEPRLPQGAFPEHHHDFHEIVIVEHGTGIHVLNGQPYTISGGMVCFIRDSDRHMYEHTDNLNLTNVLYRSPDKFRFLAGLHQLLPQECNGHYPSHWRIDQHTLQQVRQLITRLEQVSAGQDLSTVANREILFMQLLVALRKNSLLEGDENTDARLNHLIAWLEDHFAEAVSWEAIADRFALSLRTLHRQLKQHTGLTPQRYLNRLRLVKARHLLRHSDDSVTHIAFSCGFADSNHFSTLFRREFGWSPREIRQGRDASLQ</sequence>
<proteinExistence type="inferred from homology"/>
<protein>
    <recommendedName>
        <fullName evidence="1">HTH-type transcriptional activator RhaS</fullName>
    </recommendedName>
    <alternativeName>
        <fullName evidence="1">L-rhamnose operon regulatory protein RhaS</fullName>
    </alternativeName>
</protein>
<name>RHAS_ESCF3</name>
<dbReference type="EMBL" id="CU928158">
    <property type="protein sequence ID" value="CAQ91301.1"/>
    <property type="molecule type" value="Genomic_DNA"/>
</dbReference>
<dbReference type="RefSeq" id="WP_000163649.1">
    <property type="nucleotide sequence ID" value="NC_011740.1"/>
</dbReference>
<dbReference type="SMR" id="B7LVD8"/>
<dbReference type="GeneID" id="75059460"/>
<dbReference type="KEGG" id="efe:EFER_3866"/>
<dbReference type="HOGENOM" id="CLU_000445_88_5_6"/>
<dbReference type="OrthoDB" id="2547276at2"/>
<dbReference type="Proteomes" id="UP000000745">
    <property type="component" value="Chromosome"/>
</dbReference>
<dbReference type="GO" id="GO:0005737">
    <property type="term" value="C:cytoplasm"/>
    <property type="evidence" value="ECO:0007669"/>
    <property type="project" value="UniProtKB-SubCell"/>
</dbReference>
<dbReference type="GO" id="GO:0003700">
    <property type="term" value="F:DNA-binding transcription factor activity"/>
    <property type="evidence" value="ECO:0007669"/>
    <property type="project" value="UniProtKB-UniRule"/>
</dbReference>
<dbReference type="GO" id="GO:0043565">
    <property type="term" value="F:sequence-specific DNA binding"/>
    <property type="evidence" value="ECO:0007669"/>
    <property type="project" value="InterPro"/>
</dbReference>
<dbReference type="GO" id="GO:0045893">
    <property type="term" value="P:positive regulation of DNA-templated transcription"/>
    <property type="evidence" value="ECO:0007669"/>
    <property type="project" value="UniProtKB-UniRule"/>
</dbReference>
<dbReference type="GO" id="GO:0019299">
    <property type="term" value="P:rhamnose metabolic process"/>
    <property type="evidence" value="ECO:0007669"/>
    <property type="project" value="UniProtKB-UniRule"/>
</dbReference>
<dbReference type="CDD" id="cd06977">
    <property type="entry name" value="cupin_RhaR_RhaS-like_N"/>
    <property type="match status" value="1"/>
</dbReference>
<dbReference type="Gene3D" id="1.10.10.60">
    <property type="entry name" value="Homeodomain-like"/>
    <property type="match status" value="1"/>
</dbReference>
<dbReference type="Gene3D" id="2.60.120.10">
    <property type="entry name" value="Jelly Rolls"/>
    <property type="match status" value="1"/>
</dbReference>
<dbReference type="HAMAP" id="MF_01534">
    <property type="entry name" value="HTH_type_RhaS"/>
    <property type="match status" value="1"/>
</dbReference>
<dbReference type="InterPro" id="IPR003313">
    <property type="entry name" value="AraC-bd"/>
</dbReference>
<dbReference type="InterPro" id="IPR050204">
    <property type="entry name" value="AraC_XylS_family_regulators"/>
</dbReference>
<dbReference type="InterPro" id="IPR009057">
    <property type="entry name" value="Homeodomain-like_sf"/>
</dbReference>
<dbReference type="InterPro" id="IPR037923">
    <property type="entry name" value="HTH-like"/>
</dbReference>
<dbReference type="InterPro" id="IPR018060">
    <property type="entry name" value="HTH_AraC"/>
</dbReference>
<dbReference type="InterPro" id="IPR047220">
    <property type="entry name" value="RhaR_RhaS-like_N"/>
</dbReference>
<dbReference type="InterPro" id="IPR014710">
    <property type="entry name" value="RmlC-like_jellyroll"/>
</dbReference>
<dbReference type="InterPro" id="IPR020449">
    <property type="entry name" value="Tscrpt_reg_AraC-type_HTH"/>
</dbReference>
<dbReference type="InterPro" id="IPR023609">
    <property type="entry name" value="Tscrpt_reg_HTH_RhaS"/>
</dbReference>
<dbReference type="NCBIfam" id="NF010028">
    <property type="entry name" value="PRK13503.1"/>
    <property type="match status" value="1"/>
</dbReference>
<dbReference type="PANTHER" id="PTHR46796:SF13">
    <property type="entry name" value="HTH-TYPE TRANSCRIPTIONAL ACTIVATOR RHAS"/>
    <property type="match status" value="1"/>
</dbReference>
<dbReference type="PANTHER" id="PTHR46796">
    <property type="entry name" value="HTH-TYPE TRANSCRIPTIONAL ACTIVATOR RHAS-RELATED"/>
    <property type="match status" value="1"/>
</dbReference>
<dbReference type="Pfam" id="PF02311">
    <property type="entry name" value="AraC_binding"/>
    <property type="match status" value="1"/>
</dbReference>
<dbReference type="Pfam" id="PF12833">
    <property type="entry name" value="HTH_18"/>
    <property type="match status" value="1"/>
</dbReference>
<dbReference type="PRINTS" id="PR00032">
    <property type="entry name" value="HTHARAC"/>
</dbReference>
<dbReference type="SMART" id="SM00342">
    <property type="entry name" value="HTH_ARAC"/>
    <property type="match status" value="1"/>
</dbReference>
<dbReference type="SUPFAM" id="SSF46689">
    <property type="entry name" value="Homeodomain-like"/>
    <property type="match status" value="2"/>
</dbReference>
<dbReference type="SUPFAM" id="SSF51215">
    <property type="entry name" value="Regulatory protein AraC"/>
    <property type="match status" value="1"/>
</dbReference>
<dbReference type="PROSITE" id="PS01124">
    <property type="entry name" value="HTH_ARAC_FAMILY_2"/>
    <property type="match status" value="1"/>
</dbReference>
<reference key="1">
    <citation type="journal article" date="2009" name="PLoS Genet.">
        <title>Organised genome dynamics in the Escherichia coli species results in highly diverse adaptive paths.</title>
        <authorList>
            <person name="Touchon M."/>
            <person name="Hoede C."/>
            <person name="Tenaillon O."/>
            <person name="Barbe V."/>
            <person name="Baeriswyl S."/>
            <person name="Bidet P."/>
            <person name="Bingen E."/>
            <person name="Bonacorsi S."/>
            <person name="Bouchier C."/>
            <person name="Bouvet O."/>
            <person name="Calteau A."/>
            <person name="Chiapello H."/>
            <person name="Clermont O."/>
            <person name="Cruveiller S."/>
            <person name="Danchin A."/>
            <person name="Diard M."/>
            <person name="Dossat C."/>
            <person name="Karoui M.E."/>
            <person name="Frapy E."/>
            <person name="Garry L."/>
            <person name="Ghigo J.M."/>
            <person name="Gilles A.M."/>
            <person name="Johnson J."/>
            <person name="Le Bouguenec C."/>
            <person name="Lescat M."/>
            <person name="Mangenot S."/>
            <person name="Martinez-Jehanne V."/>
            <person name="Matic I."/>
            <person name="Nassif X."/>
            <person name="Oztas S."/>
            <person name="Petit M.A."/>
            <person name="Pichon C."/>
            <person name="Rouy Z."/>
            <person name="Ruf C.S."/>
            <person name="Schneider D."/>
            <person name="Tourret J."/>
            <person name="Vacherie B."/>
            <person name="Vallenet D."/>
            <person name="Medigue C."/>
            <person name="Rocha E.P.C."/>
            <person name="Denamur E."/>
        </authorList>
    </citation>
    <scope>NUCLEOTIDE SEQUENCE [LARGE SCALE GENOMIC DNA]</scope>
    <source>
        <strain>ATCC 35469 / DSM 13698 / BCRC 15582 / CCUG 18766 / IAM 14443 / JCM 21226 / LMG 7866 / NBRC 102419 / NCTC 12128 / CDC 0568-73</strain>
    </source>
</reference>
<gene>
    <name evidence="1" type="primary">rhaS</name>
    <name type="ordered locus">EFER_3866</name>
</gene>
<comment type="function">
    <text evidence="1">Activates expression of the rhaBAD and rhaT operons.</text>
</comment>
<comment type="subunit">
    <text evidence="1">Binds DNA as a dimer.</text>
</comment>
<comment type="subcellular location">
    <subcellularLocation>
        <location evidence="1">Cytoplasm</location>
    </subcellularLocation>
</comment>
<organism>
    <name type="scientific">Escherichia fergusonii (strain ATCC 35469 / DSM 13698 / CCUG 18766 / IAM 14443 / JCM 21226 / LMG 7866 / NBRC 102419 / NCTC 12128 / CDC 0568-73)</name>
    <dbReference type="NCBI Taxonomy" id="585054"/>
    <lineage>
        <taxon>Bacteria</taxon>
        <taxon>Pseudomonadati</taxon>
        <taxon>Pseudomonadota</taxon>
        <taxon>Gammaproteobacteria</taxon>
        <taxon>Enterobacterales</taxon>
        <taxon>Enterobacteriaceae</taxon>
        <taxon>Escherichia</taxon>
    </lineage>
</organism>